<proteinExistence type="inferred from homology"/>
<comment type="function">
    <text evidence="1">Plays a role in cell envelope biogenesis, maintenance of cell envelope integrity and membrane homeostasis.</text>
</comment>
<comment type="subcellular location">
    <subcellularLocation>
        <location evidence="1">Cell inner membrane</location>
        <topology evidence="1">Multi-pass membrane protein</topology>
    </subcellularLocation>
</comment>
<comment type="similarity">
    <text evidence="1">Belongs to the YciB family.</text>
</comment>
<accession>Q0BEG9</accession>
<evidence type="ECO:0000255" key="1">
    <source>
        <dbReference type="HAMAP-Rule" id="MF_00189"/>
    </source>
</evidence>
<dbReference type="EMBL" id="CP000440">
    <property type="protein sequence ID" value="ABI87454.1"/>
    <property type="molecule type" value="Genomic_DNA"/>
</dbReference>
<dbReference type="RefSeq" id="WP_006753406.1">
    <property type="nucleotide sequence ID" value="NZ_CP009798.1"/>
</dbReference>
<dbReference type="KEGG" id="bam:Bamb_1898"/>
<dbReference type="PATRIC" id="fig|339670.21.peg.3054"/>
<dbReference type="eggNOG" id="COG2917">
    <property type="taxonomic scope" value="Bacteria"/>
</dbReference>
<dbReference type="Proteomes" id="UP000000662">
    <property type="component" value="Chromosome 1"/>
</dbReference>
<dbReference type="GO" id="GO:0005886">
    <property type="term" value="C:plasma membrane"/>
    <property type="evidence" value="ECO:0007669"/>
    <property type="project" value="UniProtKB-SubCell"/>
</dbReference>
<dbReference type="HAMAP" id="MF_00189">
    <property type="entry name" value="YciB"/>
    <property type="match status" value="1"/>
</dbReference>
<dbReference type="InterPro" id="IPR006008">
    <property type="entry name" value="YciB"/>
</dbReference>
<dbReference type="NCBIfam" id="TIGR00997">
    <property type="entry name" value="ispZ"/>
    <property type="match status" value="1"/>
</dbReference>
<dbReference type="NCBIfam" id="NF001325">
    <property type="entry name" value="PRK00259.1-3"/>
    <property type="match status" value="1"/>
</dbReference>
<dbReference type="PANTHER" id="PTHR36917:SF1">
    <property type="entry name" value="INNER MEMBRANE-SPANNING PROTEIN YCIB"/>
    <property type="match status" value="1"/>
</dbReference>
<dbReference type="PANTHER" id="PTHR36917">
    <property type="entry name" value="INTRACELLULAR SEPTATION PROTEIN A-RELATED"/>
    <property type="match status" value="1"/>
</dbReference>
<dbReference type="Pfam" id="PF04279">
    <property type="entry name" value="IspA"/>
    <property type="match status" value="1"/>
</dbReference>
<feature type="chain" id="PRO_1000020991" description="Inner membrane-spanning protein YciB">
    <location>
        <begin position="1"/>
        <end position="176"/>
    </location>
</feature>
<feature type="transmembrane region" description="Helical" evidence="1">
    <location>
        <begin position="3"/>
        <end position="23"/>
    </location>
</feature>
<feature type="transmembrane region" description="Helical" evidence="1">
    <location>
        <begin position="24"/>
        <end position="44"/>
    </location>
</feature>
<feature type="transmembrane region" description="Helical" evidence="1">
    <location>
        <begin position="49"/>
        <end position="69"/>
    </location>
</feature>
<feature type="transmembrane region" description="Helical" evidence="1">
    <location>
        <begin position="81"/>
        <end position="101"/>
    </location>
</feature>
<feature type="transmembrane region" description="Helical" evidence="1">
    <location>
        <begin position="119"/>
        <end position="139"/>
    </location>
</feature>
<feature type="transmembrane region" description="Helical" evidence="1">
    <location>
        <begin position="149"/>
        <end position="169"/>
    </location>
</feature>
<keyword id="KW-0997">Cell inner membrane</keyword>
<keyword id="KW-1003">Cell membrane</keyword>
<keyword id="KW-0472">Membrane</keyword>
<keyword id="KW-0812">Transmembrane</keyword>
<keyword id="KW-1133">Transmembrane helix</keyword>
<protein>
    <recommendedName>
        <fullName evidence="1">Inner membrane-spanning protein YciB</fullName>
    </recommendedName>
</protein>
<sequence length="176" mass="20124">MKFLFDLFPIILFFAAFKVWGIFTATAVAIVATLAQVAWVAFRHRKVDTMLWVSLGVIVVFGGATLVLHDEKFIQWKPTVLYWLFAIGLLAARYAFGNNLIEKMMGKQLTLPHPVWDKLNVAWALFFAVLGVANLYVVHNYTESQWVNFKLFGTTGAMVVFIILQSLWLTKYLKDE</sequence>
<name>YCIB_BURCM</name>
<organism>
    <name type="scientific">Burkholderia ambifaria (strain ATCC BAA-244 / DSM 16087 / CCUG 44356 / LMG 19182 / AMMD)</name>
    <name type="common">Burkholderia cepacia (strain AMMD)</name>
    <dbReference type="NCBI Taxonomy" id="339670"/>
    <lineage>
        <taxon>Bacteria</taxon>
        <taxon>Pseudomonadati</taxon>
        <taxon>Pseudomonadota</taxon>
        <taxon>Betaproteobacteria</taxon>
        <taxon>Burkholderiales</taxon>
        <taxon>Burkholderiaceae</taxon>
        <taxon>Burkholderia</taxon>
        <taxon>Burkholderia cepacia complex</taxon>
    </lineage>
</organism>
<gene>
    <name evidence="1" type="primary">yciB</name>
    <name type="ordered locus">Bamb_1898</name>
</gene>
<reference key="1">
    <citation type="submission" date="2006-08" db="EMBL/GenBank/DDBJ databases">
        <title>Complete sequence of chromosome 1 of Burkholderia cepacia AMMD.</title>
        <authorList>
            <person name="Copeland A."/>
            <person name="Lucas S."/>
            <person name="Lapidus A."/>
            <person name="Barry K."/>
            <person name="Detter J.C."/>
            <person name="Glavina del Rio T."/>
            <person name="Hammon N."/>
            <person name="Israni S."/>
            <person name="Pitluck S."/>
            <person name="Bruce D."/>
            <person name="Chain P."/>
            <person name="Malfatti S."/>
            <person name="Shin M."/>
            <person name="Vergez L."/>
            <person name="Schmutz J."/>
            <person name="Larimer F."/>
            <person name="Land M."/>
            <person name="Hauser L."/>
            <person name="Kyrpides N."/>
            <person name="Kim E."/>
            <person name="Parke J."/>
            <person name="Coenye T."/>
            <person name="Konstantinidis K."/>
            <person name="Ramette A."/>
            <person name="Tiedje J."/>
            <person name="Richardson P."/>
        </authorList>
    </citation>
    <scope>NUCLEOTIDE SEQUENCE [LARGE SCALE GENOMIC DNA]</scope>
    <source>
        <strain>ATCC BAA-244 / DSM 16087 / CCUG 44356 / LMG 19182 / AMMD</strain>
    </source>
</reference>